<evidence type="ECO:0000255" key="1"/>
<evidence type="ECO:0000255" key="2">
    <source>
        <dbReference type="HAMAP-Rule" id="MF_01895"/>
    </source>
</evidence>
<evidence type="ECO:0000256" key="3">
    <source>
        <dbReference type="SAM" id="MobiDB-lite"/>
    </source>
</evidence>
<feature type="chain" id="PRO_0000166416" description="Ribonuclease R">
    <location>
        <begin position="1"/>
        <end position="835"/>
    </location>
</feature>
<feature type="domain" description="RNB" evidence="1">
    <location>
        <begin position="267"/>
        <end position="593"/>
    </location>
</feature>
<feature type="domain" description="S1 motif" evidence="2">
    <location>
        <begin position="652"/>
        <end position="733"/>
    </location>
</feature>
<feature type="region of interest" description="Disordered" evidence="3">
    <location>
        <begin position="739"/>
        <end position="835"/>
    </location>
</feature>
<feature type="compositionally biased region" description="Basic and acidic residues" evidence="3">
    <location>
        <begin position="739"/>
        <end position="754"/>
    </location>
</feature>
<feature type="compositionally biased region" description="Basic residues" evidence="3">
    <location>
        <begin position="755"/>
        <end position="764"/>
    </location>
</feature>
<feature type="compositionally biased region" description="Low complexity" evidence="3">
    <location>
        <begin position="765"/>
        <end position="777"/>
    </location>
</feature>
<feature type="compositionally biased region" description="Basic and acidic residues" evidence="3">
    <location>
        <begin position="783"/>
        <end position="793"/>
    </location>
</feature>
<feature type="compositionally biased region" description="Basic residues" evidence="3">
    <location>
        <begin position="809"/>
        <end position="829"/>
    </location>
</feature>
<keyword id="KW-0963">Cytoplasm</keyword>
<keyword id="KW-0269">Exonuclease</keyword>
<keyword id="KW-0378">Hydrolase</keyword>
<keyword id="KW-0540">Nuclease</keyword>
<keyword id="KW-0694">RNA-binding</keyword>
<reference key="1">
    <citation type="journal article" date="2003" name="Lancet">
        <title>Genome sequence of Vibrio parahaemolyticus: a pathogenic mechanism distinct from that of V. cholerae.</title>
        <authorList>
            <person name="Makino K."/>
            <person name="Oshima K."/>
            <person name="Kurokawa K."/>
            <person name="Yokoyama K."/>
            <person name="Uda T."/>
            <person name="Tagomori K."/>
            <person name="Iijima Y."/>
            <person name="Najima M."/>
            <person name="Nakano M."/>
            <person name="Yamashita A."/>
            <person name="Kubota Y."/>
            <person name="Kimura S."/>
            <person name="Yasunaga T."/>
            <person name="Honda T."/>
            <person name="Shinagawa H."/>
            <person name="Hattori M."/>
            <person name="Iida T."/>
        </authorList>
    </citation>
    <scope>NUCLEOTIDE SEQUENCE [LARGE SCALE GENOMIC DNA]</scope>
    <source>
        <strain>RIMD 2210633</strain>
    </source>
</reference>
<reference key="2">
    <citation type="submission" date="1994-04" db="EMBL/GenBank/DDBJ databases">
        <authorList>
            <person name="McCarter L.L."/>
        </authorList>
    </citation>
    <scope>NUCLEOTIDE SEQUENCE [GENOMIC DNA] OF 1-383</scope>
    <source>
        <strain>BB22</strain>
    </source>
</reference>
<dbReference type="EC" id="3.1.13.1" evidence="2"/>
<dbReference type="EMBL" id="BA000031">
    <property type="protein sequence ID" value="BAC61070.1"/>
    <property type="molecule type" value="Genomic_DNA"/>
</dbReference>
<dbReference type="EMBL" id="U09005">
    <property type="protein sequence ID" value="AAA62192.1"/>
    <property type="molecule type" value="Genomic_DNA"/>
</dbReference>
<dbReference type="RefSeq" id="NP_799186.1">
    <property type="nucleotide sequence ID" value="NC_004603.1"/>
</dbReference>
<dbReference type="RefSeq" id="WP_005480076.1">
    <property type="nucleotide sequence ID" value="NC_004603.1"/>
</dbReference>
<dbReference type="SMR" id="P40611"/>
<dbReference type="GeneID" id="1190357"/>
<dbReference type="KEGG" id="vpa:VP2807"/>
<dbReference type="PATRIC" id="fig|223926.6.peg.2699"/>
<dbReference type="eggNOG" id="COG0557">
    <property type="taxonomic scope" value="Bacteria"/>
</dbReference>
<dbReference type="HOGENOM" id="CLU_002333_7_0_6"/>
<dbReference type="Proteomes" id="UP000002493">
    <property type="component" value="Chromosome 1"/>
</dbReference>
<dbReference type="GO" id="GO:0005829">
    <property type="term" value="C:cytosol"/>
    <property type="evidence" value="ECO:0007669"/>
    <property type="project" value="UniProtKB-ARBA"/>
</dbReference>
<dbReference type="GO" id="GO:0008859">
    <property type="term" value="F:exoribonuclease II activity"/>
    <property type="evidence" value="ECO:0007669"/>
    <property type="project" value="UniProtKB-UniRule"/>
</dbReference>
<dbReference type="GO" id="GO:0003723">
    <property type="term" value="F:RNA binding"/>
    <property type="evidence" value="ECO:0007669"/>
    <property type="project" value="UniProtKB-UniRule"/>
</dbReference>
<dbReference type="GO" id="GO:0006402">
    <property type="term" value="P:mRNA catabolic process"/>
    <property type="evidence" value="ECO:0007669"/>
    <property type="project" value="TreeGrafter"/>
</dbReference>
<dbReference type="CDD" id="cd04471">
    <property type="entry name" value="S1_RNase_R"/>
    <property type="match status" value="1"/>
</dbReference>
<dbReference type="FunFam" id="2.40.50.140:FF:000124">
    <property type="entry name" value="Ribonuclease R"/>
    <property type="match status" value="1"/>
</dbReference>
<dbReference type="FunFam" id="2.40.50.140:FF:000161">
    <property type="entry name" value="Ribonuclease R"/>
    <property type="match status" value="1"/>
</dbReference>
<dbReference type="Gene3D" id="2.40.50.140">
    <property type="entry name" value="Nucleic acid-binding proteins"/>
    <property type="match status" value="2"/>
</dbReference>
<dbReference type="HAMAP" id="MF_01895">
    <property type="entry name" value="RNase_R"/>
    <property type="match status" value="1"/>
</dbReference>
<dbReference type="InterPro" id="IPR011129">
    <property type="entry name" value="CSD"/>
</dbReference>
<dbReference type="InterPro" id="IPR040476">
    <property type="entry name" value="CSD2"/>
</dbReference>
<dbReference type="InterPro" id="IPR012340">
    <property type="entry name" value="NA-bd_OB-fold"/>
</dbReference>
<dbReference type="InterPro" id="IPR013223">
    <property type="entry name" value="RNase_B_OB_dom"/>
</dbReference>
<dbReference type="InterPro" id="IPR001900">
    <property type="entry name" value="RNase_II/R"/>
</dbReference>
<dbReference type="InterPro" id="IPR022966">
    <property type="entry name" value="RNase_II/R_CS"/>
</dbReference>
<dbReference type="InterPro" id="IPR004476">
    <property type="entry name" value="RNase_II/RNase_R"/>
</dbReference>
<dbReference type="InterPro" id="IPR011805">
    <property type="entry name" value="RNase_R"/>
</dbReference>
<dbReference type="InterPro" id="IPR013668">
    <property type="entry name" value="RNase_R_HTH_12"/>
</dbReference>
<dbReference type="InterPro" id="IPR050180">
    <property type="entry name" value="RNR_Ribonuclease"/>
</dbReference>
<dbReference type="InterPro" id="IPR003029">
    <property type="entry name" value="S1_domain"/>
</dbReference>
<dbReference type="NCBIfam" id="TIGR00358">
    <property type="entry name" value="3_prime_RNase"/>
    <property type="match status" value="1"/>
</dbReference>
<dbReference type="NCBIfam" id="NF008648">
    <property type="entry name" value="PRK11642.1"/>
    <property type="match status" value="1"/>
</dbReference>
<dbReference type="NCBIfam" id="TIGR02063">
    <property type="entry name" value="RNase_R"/>
    <property type="match status" value="1"/>
</dbReference>
<dbReference type="PANTHER" id="PTHR23355:SF9">
    <property type="entry name" value="DIS3-LIKE EXONUCLEASE 2"/>
    <property type="match status" value="1"/>
</dbReference>
<dbReference type="PANTHER" id="PTHR23355">
    <property type="entry name" value="RIBONUCLEASE"/>
    <property type="match status" value="1"/>
</dbReference>
<dbReference type="Pfam" id="PF17876">
    <property type="entry name" value="CSD2"/>
    <property type="match status" value="1"/>
</dbReference>
<dbReference type="Pfam" id="PF08461">
    <property type="entry name" value="HTH_12"/>
    <property type="match status" value="1"/>
</dbReference>
<dbReference type="Pfam" id="PF08206">
    <property type="entry name" value="OB_RNB"/>
    <property type="match status" value="1"/>
</dbReference>
<dbReference type="Pfam" id="PF00773">
    <property type="entry name" value="RNB"/>
    <property type="match status" value="1"/>
</dbReference>
<dbReference type="Pfam" id="PF00575">
    <property type="entry name" value="S1"/>
    <property type="match status" value="1"/>
</dbReference>
<dbReference type="SMART" id="SM00357">
    <property type="entry name" value="CSP"/>
    <property type="match status" value="1"/>
</dbReference>
<dbReference type="SMART" id="SM00955">
    <property type="entry name" value="RNB"/>
    <property type="match status" value="1"/>
</dbReference>
<dbReference type="SMART" id="SM00316">
    <property type="entry name" value="S1"/>
    <property type="match status" value="1"/>
</dbReference>
<dbReference type="SUPFAM" id="SSF50249">
    <property type="entry name" value="Nucleic acid-binding proteins"/>
    <property type="match status" value="4"/>
</dbReference>
<dbReference type="PROSITE" id="PS01175">
    <property type="entry name" value="RIBONUCLEASE_II"/>
    <property type="match status" value="1"/>
</dbReference>
<dbReference type="PROSITE" id="PS50126">
    <property type="entry name" value="S1"/>
    <property type="match status" value="1"/>
</dbReference>
<accession>P40611</accession>
<protein>
    <recommendedName>
        <fullName evidence="2">Ribonuclease R</fullName>
        <shortName evidence="2">RNase R</shortName>
        <ecNumber evidence="2">3.1.13.1</ecNumber>
    </recommendedName>
    <alternativeName>
        <fullName>VacB protein homolog</fullName>
    </alternativeName>
</protein>
<comment type="function">
    <text evidence="2">3'-5' exoribonuclease that releases 5'-nucleoside monophosphates and is involved in maturation of structured RNAs.</text>
</comment>
<comment type="catalytic activity">
    <reaction evidence="2">
        <text>Exonucleolytic cleavage in the 3'- to 5'-direction to yield nucleoside 5'-phosphates.</text>
        <dbReference type="EC" id="3.1.13.1"/>
    </reaction>
</comment>
<comment type="subcellular location">
    <subcellularLocation>
        <location evidence="2">Cytoplasm</location>
    </subcellularLocation>
</comment>
<comment type="similarity">
    <text evidence="2">Belongs to the RNR ribonuclease family. RNase R subfamily.</text>
</comment>
<organism>
    <name type="scientific">Vibrio parahaemolyticus serotype O3:K6 (strain RIMD 2210633)</name>
    <dbReference type="NCBI Taxonomy" id="223926"/>
    <lineage>
        <taxon>Bacteria</taxon>
        <taxon>Pseudomonadati</taxon>
        <taxon>Pseudomonadota</taxon>
        <taxon>Gammaproteobacteria</taxon>
        <taxon>Vibrionales</taxon>
        <taxon>Vibrionaceae</taxon>
        <taxon>Vibrio</taxon>
    </lineage>
</organism>
<proteinExistence type="inferred from homology"/>
<name>RNR_VIBPA</name>
<gene>
    <name evidence="2" type="primary">rnr</name>
    <name type="synonym">vacB</name>
    <name type="ordered locus">VP2807</name>
</gene>
<sequence length="835" mass="95037">MSDNIPNDPFADRESQNYENPIPSREFILEFLEQAGVPMNRNDLFEALKLAGEEQYEGLRRRLRAMERDGQLVFTRRQCYALPEKLEMVKGYVIGHKDGHGWVRPEGSVGKDDDILLPHHQMKNIIHGDFVLVQPTDNSKRGRREGRLVRVLEERNSQIVGRFFLEYGYSYVVPDDSRISQDILIPNEHKAGARMGNVVVIEITDRGSRSRGMMGKVVEVLGENMAPGMETQIAIRTHQIPYEWPEAVEKQIVNLGEEVPEEAKVGRVDLRELPLVTIDGEDARDFDDAVFCEKKKDGGWRLWVAIADVSYYVRPDSALDKEAINRGNSVYFPSQVVPMLPEVLSNGLCSLNPQVDRLCMVCEMTISESGKLSSYKHYEAVMNSHARLTYSKVSAILEGDEELRERYQPLVSHLEELHAMYKVLKEARDQRGAIEFETVETKFIFNAERKIESIEPVIRNDAHKIIEECMILANIASASLVEKAKEPALYRIHESPGELRLQGFRDFLSELGLELKGGLEPSPTDYADLARQIAGRQDQELIQTMLLRSMKQAVYNADNAGHFGLALKRYAHFTSPIRRYPDLLLHRAIKYLIAKEEGRNQDRWTPTGGYHYSFDDMDFYGEQCSMTERRADDATREVADWLKCEYMQDHVGDELEGVIANVTSFGFFVRLTDLHIDGLVHISTLANDYYQFDPIGQRLIGESFGNIYRLGDAVKVKVLAVNLDDKQIDFELVETSRKLRGEGKTAKKRAAEAKRKAKEKKRAATRSSSKESATARAVPAIEPTKRPEQTDSGRKRKGPKRGDDDSAKKPKVKKAHKKKPHSKPKKTKRTKQDAQ</sequence>